<comment type="function">
    <text evidence="2">Conversion of NADPH, generated by peripheral catabolic pathways, to NADH, which can enter the respiratory chain for energy generation.</text>
</comment>
<comment type="catalytic activity">
    <reaction evidence="2">
        <text>NAD(+) + NADPH = NADH + NADP(+)</text>
        <dbReference type="Rhea" id="RHEA:11692"/>
        <dbReference type="ChEBI" id="CHEBI:57540"/>
        <dbReference type="ChEBI" id="CHEBI:57783"/>
        <dbReference type="ChEBI" id="CHEBI:57945"/>
        <dbReference type="ChEBI" id="CHEBI:58349"/>
        <dbReference type="EC" id="1.6.1.1"/>
    </reaction>
</comment>
<comment type="cofactor">
    <cofactor evidence="2">
        <name>FAD</name>
        <dbReference type="ChEBI" id="CHEBI:57692"/>
    </cofactor>
    <text evidence="2">Binds 1 FAD per subunit.</text>
</comment>
<comment type="subunit">
    <text evidence="1">Homooligomer; probable homooctamer.</text>
</comment>
<comment type="subcellular location">
    <subcellularLocation>
        <location evidence="2">Cytoplasm</location>
    </subcellularLocation>
</comment>
<comment type="similarity">
    <text evidence="2">Belongs to the class-I pyridine nucleotide-disulfide oxidoreductase family.</text>
</comment>
<protein>
    <recommendedName>
        <fullName evidence="2">Soluble pyridine nucleotide transhydrogenase</fullName>
        <shortName evidence="2">STH</shortName>
        <ecNumber evidence="2">1.6.1.1</ecNumber>
    </recommendedName>
    <alternativeName>
        <fullName evidence="2">NAD(P)(+) transhydrogenase [B-specific]</fullName>
    </alternativeName>
</protein>
<organism>
    <name type="scientific">Escherichia coli O6:H1 (strain CFT073 / ATCC 700928 / UPEC)</name>
    <dbReference type="NCBI Taxonomy" id="199310"/>
    <lineage>
        <taxon>Bacteria</taxon>
        <taxon>Pseudomonadati</taxon>
        <taxon>Pseudomonadota</taxon>
        <taxon>Gammaproteobacteria</taxon>
        <taxon>Enterobacterales</taxon>
        <taxon>Enterobacteriaceae</taxon>
        <taxon>Escherichia</taxon>
    </lineage>
</organism>
<sequence length="466" mass="51573">MPHSYDYDAIVIGSGPGGEGAAMGLVKQGARVAVIERYQNVGGGCTHWGTIPSKALRHAVSRIIEFNQNPLYSDHSRLLRSSFADILNHADNVINQQTRMRQGFYERNHCEILQGNARFVDEHTLALDCPDGSVETLTAEKFVIACGSRPYHPTDVDFTHPRIYDSDSILSMHHEPRHVLIYGAGVIGCEYASIFRGMDVKVDLINTRDRLLAFLDQEMSDSLSYHFWNSGVVIRHNEEYEKIEGCDDGVIMHLKSGKKLKADCLLYANGRTGNTDSLALQNIGLETDSRGQLKVNSMYQTAQPHVYAVGDVIGYPSLASAAYDQGRIAAQALVKGEANAHLIEDIPTGIYTIPEISSVGKTEQQLTAMKVPYEVGRAQFKHLARAQIVGMNVGTLKILFHRETKEILGIHCFGERAAEIIHIGQAIMEQKGGGNTIEYFVNTTFNYPTMAEAYRVAALNGLNRLF</sequence>
<reference key="1">
    <citation type="journal article" date="2002" name="Proc. Natl. Acad. Sci. U.S.A.">
        <title>Extensive mosaic structure revealed by the complete genome sequence of uropathogenic Escherichia coli.</title>
        <authorList>
            <person name="Welch R.A."/>
            <person name="Burland V."/>
            <person name="Plunkett G. III"/>
            <person name="Redford P."/>
            <person name="Roesch P."/>
            <person name="Rasko D."/>
            <person name="Buckles E.L."/>
            <person name="Liou S.-R."/>
            <person name="Boutin A."/>
            <person name="Hackett J."/>
            <person name="Stroud D."/>
            <person name="Mayhew G.F."/>
            <person name="Rose D.J."/>
            <person name="Zhou S."/>
            <person name="Schwartz D.C."/>
            <person name="Perna N.T."/>
            <person name="Mobley H.L.T."/>
            <person name="Donnenberg M.S."/>
            <person name="Blattner F.R."/>
        </authorList>
    </citation>
    <scope>NUCLEOTIDE SEQUENCE [LARGE SCALE GENOMIC DNA]</scope>
    <source>
        <strain>CFT073 / ATCC 700928 / UPEC</strain>
    </source>
</reference>
<name>STHA_ECOL6</name>
<proteinExistence type="inferred from homology"/>
<accession>Q8FB93</accession>
<feature type="initiator methionine" description="Removed" evidence="1">
    <location>
        <position position="1"/>
    </location>
</feature>
<feature type="chain" id="PRO_0000068062" description="Soluble pyridine nucleotide transhydrogenase">
    <location>
        <begin position="2"/>
        <end position="466"/>
    </location>
</feature>
<feature type="binding site" evidence="2">
    <location>
        <begin position="36"/>
        <end position="45"/>
    </location>
    <ligand>
        <name>FAD</name>
        <dbReference type="ChEBI" id="CHEBI:57692"/>
    </ligand>
</feature>
<gene>
    <name evidence="2" type="primary">sthA</name>
    <name evidence="2" type="synonym">udhA</name>
    <name type="ordered locus">c4923</name>
</gene>
<keyword id="KW-0963">Cytoplasm</keyword>
<keyword id="KW-0274">FAD</keyword>
<keyword id="KW-0285">Flavoprotein</keyword>
<keyword id="KW-0520">NAD</keyword>
<keyword id="KW-0521">NADP</keyword>
<keyword id="KW-0560">Oxidoreductase</keyword>
<keyword id="KW-1185">Reference proteome</keyword>
<dbReference type="EC" id="1.6.1.1" evidence="2"/>
<dbReference type="EMBL" id="AE014075">
    <property type="protein sequence ID" value="AAN83351.1"/>
    <property type="molecule type" value="Genomic_DNA"/>
</dbReference>
<dbReference type="RefSeq" id="WP_001120806.1">
    <property type="nucleotide sequence ID" value="NZ_CP051263.1"/>
</dbReference>
<dbReference type="SMR" id="Q8FB93"/>
<dbReference type="STRING" id="199310.c4923"/>
<dbReference type="KEGG" id="ecc:c4923"/>
<dbReference type="eggNOG" id="COG1249">
    <property type="taxonomic scope" value="Bacteria"/>
</dbReference>
<dbReference type="HOGENOM" id="CLU_016755_0_0_6"/>
<dbReference type="BioCyc" id="ECOL199310:C4923-MONOMER"/>
<dbReference type="Proteomes" id="UP000001410">
    <property type="component" value="Chromosome"/>
</dbReference>
<dbReference type="GO" id="GO:0005829">
    <property type="term" value="C:cytosol"/>
    <property type="evidence" value="ECO:0007669"/>
    <property type="project" value="TreeGrafter"/>
</dbReference>
<dbReference type="GO" id="GO:0004148">
    <property type="term" value="F:dihydrolipoyl dehydrogenase (NADH) activity"/>
    <property type="evidence" value="ECO:0007669"/>
    <property type="project" value="TreeGrafter"/>
</dbReference>
<dbReference type="GO" id="GO:0050660">
    <property type="term" value="F:flavin adenine dinucleotide binding"/>
    <property type="evidence" value="ECO:0007669"/>
    <property type="project" value="TreeGrafter"/>
</dbReference>
<dbReference type="GO" id="GO:0003957">
    <property type="term" value="F:NAD(P)+ transhydrogenase (Si-specific) activity"/>
    <property type="evidence" value="ECO:0007669"/>
    <property type="project" value="UniProtKB-UniRule"/>
</dbReference>
<dbReference type="GO" id="GO:0006103">
    <property type="term" value="P:2-oxoglutarate metabolic process"/>
    <property type="evidence" value="ECO:0007669"/>
    <property type="project" value="TreeGrafter"/>
</dbReference>
<dbReference type="GO" id="GO:0006739">
    <property type="term" value="P:NADP metabolic process"/>
    <property type="evidence" value="ECO:0007669"/>
    <property type="project" value="UniProtKB-UniRule"/>
</dbReference>
<dbReference type="FunFam" id="3.30.390.30:FF:000002">
    <property type="entry name" value="Soluble pyridine nucleotide transhydrogenase"/>
    <property type="match status" value="1"/>
</dbReference>
<dbReference type="FunFam" id="3.50.50.60:FF:000008">
    <property type="entry name" value="Soluble pyridine nucleotide transhydrogenase"/>
    <property type="match status" value="1"/>
</dbReference>
<dbReference type="Gene3D" id="3.30.390.30">
    <property type="match status" value="1"/>
</dbReference>
<dbReference type="Gene3D" id="3.50.50.60">
    <property type="entry name" value="FAD/NAD(P)-binding domain"/>
    <property type="match status" value="2"/>
</dbReference>
<dbReference type="HAMAP" id="MF_00247">
    <property type="entry name" value="SthA"/>
    <property type="match status" value="1"/>
</dbReference>
<dbReference type="InterPro" id="IPR050151">
    <property type="entry name" value="Class-I_Pyr_Nuc-Dis_Oxidored"/>
</dbReference>
<dbReference type="InterPro" id="IPR036188">
    <property type="entry name" value="FAD/NAD-bd_sf"/>
</dbReference>
<dbReference type="InterPro" id="IPR023753">
    <property type="entry name" value="FAD/NAD-binding_dom"/>
</dbReference>
<dbReference type="InterPro" id="IPR016156">
    <property type="entry name" value="FAD/NAD-linked_Rdtase_dimer_sf"/>
</dbReference>
<dbReference type="InterPro" id="IPR001100">
    <property type="entry name" value="Pyr_nuc-diS_OxRdtase"/>
</dbReference>
<dbReference type="InterPro" id="IPR004099">
    <property type="entry name" value="Pyr_nucl-diS_OxRdtase_dimer"/>
</dbReference>
<dbReference type="InterPro" id="IPR022962">
    <property type="entry name" value="STH_gammaproteobact"/>
</dbReference>
<dbReference type="NCBIfam" id="NF003585">
    <property type="entry name" value="PRK05249.1"/>
    <property type="match status" value="1"/>
</dbReference>
<dbReference type="PANTHER" id="PTHR22912">
    <property type="entry name" value="DISULFIDE OXIDOREDUCTASE"/>
    <property type="match status" value="1"/>
</dbReference>
<dbReference type="PANTHER" id="PTHR22912:SF93">
    <property type="entry name" value="SOLUBLE PYRIDINE NUCLEOTIDE TRANSHYDROGENASE"/>
    <property type="match status" value="1"/>
</dbReference>
<dbReference type="Pfam" id="PF07992">
    <property type="entry name" value="Pyr_redox_2"/>
    <property type="match status" value="1"/>
</dbReference>
<dbReference type="Pfam" id="PF02852">
    <property type="entry name" value="Pyr_redox_dim"/>
    <property type="match status" value="1"/>
</dbReference>
<dbReference type="PIRSF" id="PIRSF000350">
    <property type="entry name" value="Mercury_reductase_MerA"/>
    <property type="match status" value="1"/>
</dbReference>
<dbReference type="PRINTS" id="PR00368">
    <property type="entry name" value="FADPNR"/>
</dbReference>
<dbReference type="PRINTS" id="PR00411">
    <property type="entry name" value="PNDRDTASEI"/>
</dbReference>
<dbReference type="SUPFAM" id="SSF51905">
    <property type="entry name" value="FAD/NAD(P)-binding domain"/>
    <property type="match status" value="1"/>
</dbReference>
<dbReference type="SUPFAM" id="SSF55424">
    <property type="entry name" value="FAD/NAD-linked reductases, dimerisation (C-terminal) domain"/>
    <property type="match status" value="1"/>
</dbReference>
<evidence type="ECO:0000250" key="1"/>
<evidence type="ECO:0000255" key="2">
    <source>
        <dbReference type="HAMAP-Rule" id="MF_00247"/>
    </source>
</evidence>